<organism>
    <name type="scientific">Yersinia pseudotuberculosis serotype O:3 (strain YPIII)</name>
    <dbReference type="NCBI Taxonomy" id="502800"/>
    <lineage>
        <taxon>Bacteria</taxon>
        <taxon>Pseudomonadati</taxon>
        <taxon>Pseudomonadota</taxon>
        <taxon>Gammaproteobacteria</taxon>
        <taxon>Enterobacterales</taxon>
        <taxon>Yersiniaceae</taxon>
        <taxon>Yersinia</taxon>
    </lineage>
</organism>
<proteinExistence type="inferred from homology"/>
<feature type="chain" id="PRO_1000191022" description="Ketol-acid reductoisomerase (NADP(+))">
    <location>
        <begin position="1"/>
        <end position="492"/>
    </location>
</feature>
<feature type="domain" description="KARI N-terminal Rossmann" evidence="2">
    <location>
        <begin position="15"/>
        <end position="208"/>
    </location>
</feature>
<feature type="domain" description="KARI C-terminal knotted 1" evidence="3">
    <location>
        <begin position="209"/>
        <end position="344"/>
    </location>
</feature>
<feature type="domain" description="KARI C-terminal knotted 2" evidence="3">
    <location>
        <begin position="345"/>
        <end position="485"/>
    </location>
</feature>
<feature type="active site" evidence="1">
    <location>
        <position position="132"/>
    </location>
</feature>
<feature type="binding site" evidence="1">
    <location>
        <begin position="45"/>
        <end position="48"/>
    </location>
    <ligand>
        <name>NADP(+)</name>
        <dbReference type="ChEBI" id="CHEBI:58349"/>
    </ligand>
</feature>
<feature type="binding site" evidence="1">
    <location>
        <position position="68"/>
    </location>
    <ligand>
        <name>NADP(+)</name>
        <dbReference type="ChEBI" id="CHEBI:58349"/>
    </ligand>
</feature>
<feature type="binding site" evidence="1">
    <location>
        <position position="76"/>
    </location>
    <ligand>
        <name>NADP(+)</name>
        <dbReference type="ChEBI" id="CHEBI:58349"/>
    </ligand>
</feature>
<feature type="binding site" evidence="1">
    <location>
        <position position="78"/>
    </location>
    <ligand>
        <name>NADP(+)</name>
        <dbReference type="ChEBI" id="CHEBI:58349"/>
    </ligand>
</feature>
<feature type="binding site" evidence="1">
    <location>
        <begin position="108"/>
        <end position="110"/>
    </location>
    <ligand>
        <name>NADP(+)</name>
        <dbReference type="ChEBI" id="CHEBI:58349"/>
    </ligand>
</feature>
<feature type="binding site" evidence="1">
    <location>
        <position position="158"/>
    </location>
    <ligand>
        <name>NADP(+)</name>
        <dbReference type="ChEBI" id="CHEBI:58349"/>
    </ligand>
</feature>
<feature type="binding site" evidence="1">
    <location>
        <position position="217"/>
    </location>
    <ligand>
        <name>Mg(2+)</name>
        <dbReference type="ChEBI" id="CHEBI:18420"/>
        <label>1</label>
    </ligand>
</feature>
<feature type="binding site" evidence="1">
    <location>
        <position position="217"/>
    </location>
    <ligand>
        <name>Mg(2+)</name>
        <dbReference type="ChEBI" id="CHEBI:18420"/>
        <label>2</label>
    </ligand>
</feature>
<feature type="binding site" evidence="1">
    <location>
        <position position="221"/>
    </location>
    <ligand>
        <name>Mg(2+)</name>
        <dbReference type="ChEBI" id="CHEBI:18420"/>
        <label>1</label>
    </ligand>
</feature>
<feature type="binding site" evidence="1">
    <location>
        <position position="389"/>
    </location>
    <ligand>
        <name>Mg(2+)</name>
        <dbReference type="ChEBI" id="CHEBI:18420"/>
        <label>2</label>
    </ligand>
</feature>
<feature type="binding site" evidence="1">
    <location>
        <position position="393"/>
    </location>
    <ligand>
        <name>Mg(2+)</name>
        <dbReference type="ChEBI" id="CHEBI:18420"/>
        <label>2</label>
    </ligand>
</feature>
<feature type="binding site" evidence="1">
    <location>
        <position position="414"/>
    </location>
    <ligand>
        <name>substrate</name>
    </ligand>
</feature>
<protein>
    <recommendedName>
        <fullName evidence="1">Ketol-acid reductoisomerase (NADP(+))</fullName>
        <shortName evidence="1">KARI</shortName>
        <ecNumber evidence="1">1.1.1.86</ecNumber>
    </recommendedName>
    <alternativeName>
        <fullName evidence="1">Acetohydroxy-acid isomeroreductase</fullName>
        <shortName evidence="1">AHIR</shortName>
    </alternativeName>
    <alternativeName>
        <fullName evidence="1">Alpha-keto-beta-hydroxylacyl reductoisomerase</fullName>
    </alternativeName>
    <alternativeName>
        <fullName evidence="1">Ketol-acid reductoisomerase type 2</fullName>
    </alternativeName>
    <alternativeName>
        <fullName evidence="1">Ketol-acid reductoisomerase type II</fullName>
    </alternativeName>
</protein>
<dbReference type="EC" id="1.1.1.86" evidence="1"/>
<dbReference type="EMBL" id="CP000950">
    <property type="protein sequence ID" value="ACA70313.1"/>
    <property type="molecule type" value="Genomic_DNA"/>
</dbReference>
<dbReference type="RefSeq" id="WP_011191486.1">
    <property type="nucleotide sequence ID" value="NZ_CP009792.1"/>
</dbReference>
<dbReference type="SMR" id="B1JQ26"/>
<dbReference type="GeneID" id="96663628"/>
<dbReference type="KEGG" id="ypy:YPK_4051"/>
<dbReference type="PATRIC" id="fig|502800.11.peg.402"/>
<dbReference type="UniPathway" id="UPA00047">
    <property type="reaction ID" value="UER00056"/>
</dbReference>
<dbReference type="UniPathway" id="UPA00049">
    <property type="reaction ID" value="UER00060"/>
</dbReference>
<dbReference type="GO" id="GO:0005829">
    <property type="term" value="C:cytosol"/>
    <property type="evidence" value="ECO:0007669"/>
    <property type="project" value="TreeGrafter"/>
</dbReference>
<dbReference type="GO" id="GO:0004455">
    <property type="term" value="F:ketol-acid reductoisomerase activity"/>
    <property type="evidence" value="ECO:0007669"/>
    <property type="project" value="UniProtKB-UniRule"/>
</dbReference>
<dbReference type="GO" id="GO:0000287">
    <property type="term" value="F:magnesium ion binding"/>
    <property type="evidence" value="ECO:0007669"/>
    <property type="project" value="UniProtKB-UniRule"/>
</dbReference>
<dbReference type="GO" id="GO:0009097">
    <property type="term" value="P:isoleucine biosynthetic process"/>
    <property type="evidence" value="ECO:0007669"/>
    <property type="project" value="UniProtKB-UniRule"/>
</dbReference>
<dbReference type="GO" id="GO:0009099">
    <property type="term" value="P:L-valine biosynthetic process"/>
    <property type="evidence" value="ECO:0007669"/>
    <property type="project" value="UniProtKB-UniRule"/>
</dbReference>
<dbReference type="FunFam" id="1.10.1040.10:FF:000007">
    <property type="entry name" value="Ketol-acid reductoisomerase (NADP(+))"/>
    <property type="match status" value="1"/>
</dbReference>
<dbReference type="FunFam" id="3.40.50.720:FF:000043">
    <property type="entry name" value="Ketol-acid reductoisomerase (NADP(+))"/>
    <property type="match status" value="1"/>
</dbReference>
<dbReference type="Gene3D" id="1.10.1040.10">
    <property type="entry name" value="N-(1-d-carboxylethyl)-l-norvaline Dehydrogenase, domain 2"/>
    <property type="match status" value="1"/>
</dbReference>
<dbReference type="Gene3D" id="3.40.50.720">
    <property type="entry name" value="NAD(P)-binding Rossmann-like Domain"/>
    <property type="match status" value="1"/>
</dbReference>
<dbReference type="HAMAP" id="MF_00435">
    <property type="entry name" value="IlvC"/>
    <property type="match status" value="1"/>
</dbReference>
<dbReference type="InterPro" id="IPR008927">
    <property type="entry name" value="6-PGluconate_DH-like_C_sf"/>
</dbReference>
<dbReference type="InterPro" id="IPR013328">
    <property type="entry name" value="6PGD_dom2"/>
</dbReference>
<dbReference type="InterPro" id="IPR013023">
    <property type="entry name" value="KARI"/>
</dbReference>
<dbReference type="InterPro" id="IPR000506">
    <property type="entry name" value="KARI_C"/>
</dbReference>
<dbReference type="InterPro" id="IPR013116">
    <property type="entry name" value="KARI_N"/>
</dbReference>
<dbReference type="InterPro" id="IPR036291">
    <property type="entry name" value="NAD(P)-bd_dom_sf"/>
</dbReference>
<dbReference type="NCBIfam" id="TIGR00465">
    <property type="entry name" value="ilvC"/>
    <property type="match status" value="1"/>
</dbReference>
<dbReference type="NCBIfam" id="NF003557">
    <property type="entry name" value="PRK05225.1"/>
    <property type="match status" value="1"/>
</dbReference>
<dbReference type="PANTHER" id="PTHR21371">
    <property type="entry name" value="KETOL-ACID REDUCTOISOMERASE, MITOCHONDRIAL"/>
    <property type="match status" value="1"/>
</dbReference>
<dbReference type="PANTHER" id="PTHR21371:SF1">
    <property type="entry name" value="KETOL-ACID REDUCTOISOMERASE, MITOCHONDRIAL"/>
    <property type="match status" value="1"/>
</dbReference>
<dbReference type="Pfam" id="PF01450">
    <property type="entry name" value="KARI_C"/>
    <property type="match status" value="2"/>
</dbReference>
<dbReference type="Pfam" id="PF07991">
    <property type="entry name" value="KARI_N"/>
    <property type="match status" value="1"/>
</dbReference>
<dbReference type="SUPFAM" id="SSF48179">
    <property type="entry name" value="6-phosphogluconate dehydrogenase C-terminal domain-like"/>
    <property type="match status" value="2"/>
</dbReference>
<dbReference type="SUPFAM" id="SSF51735">
    <property type="entry name" value="NAD(P)-binding Rossmann-fold domains"/>
    <property type="match status" value="1"/>
</dbReference>
<dbReference type="PROSITE" id="PS51851">
    <property type="entry name" value="KARI_C"/>
    <property type="match status" value="2"/>
</dbReference>
<dbReference type="PROSITE" id="PS51850">
    <property type="entry name" value="KARI_N"/>
    <property type="match status" value="1"/>
</dbReference>
<comment type="function">
    <text evidence="1">Involved in the biosynthesis of branched-chain amino acids (BCAA). Catalyzes an alkyl-migration followed by a ketol-acid reduction of (S)-2-acetolactate (S2AL) to yield (R)-2,3-dihydroxy-isovalerate. In the isomerase reaction, S2AL is rearranged via a Mg-dependent methyl migration to produce 3-hydroxy-3-methyl-2-ketobutyrate (HMKB). In the reductase reaction, this 2-ketoacid undergoes a metal-dependent reduction by NADPH to yield (R)-2,3-dihydroxy-isovalerate.</text>
</comment>
<comment type="catalytic activity">
    <reaction evidence="1">
        <text>(2R)-2,3-dihydroxy-3-methylbutanoate + NADP(+) = (2S)-2-acetolactate + NADPH + H(+)</text>
        <dbReference type="Rhea" id="RHEA:22068"/>
        <dbReference type="ChEBI" id="CHEBI:15378"/>
        <dbReference type="ChEBI" id="CHEBI:49072"/>
        <dbReference type="ChEBI" id="CHEBI:57783"/>
        <dbReference type="ChEBI" id="CHEBI:58349"/>
        <dbReference type="ChEBI" id="CHEBI:58476"/>
        <dbReference type="EC" id="1.1.1.86"/>
    </reaction>
</comment>
<comment type="catalytic activity">
    <reaction evidence="1">
        <text>(2R,3R)-2,3-dihydroxy-3-methylpentanoate + NADP(+) = (S)-2-ethyl-2-hydroxy-3-oxobutanoate + NADPH + H(+)</text>
        <dbReference type="Rhea" id="RHEA:13493"/>
        <dbReference type="ChEBI" id="CHEBI:15378"/>
        <dbReference type="ChEBI" id="CHEBI:49256"/>
        <dbReference type="ChEBI" id="CHEBI:49258"/>
        <dbReference type="ChEBI" id="CHEBI:57783"/>
        <dbReference type="ChEBI" id="CHEBI:58349"/>
        <dbReference type="EC" id="1.1.1.86"/>
    </reaction>
</comment>
<comment type="cofactor">
    <cofactor evidence="1">
        <name>Mg(2+)</name>
        <dbReference type="ChEBI" id="CHEBI:18420"/>
    </cofactor>
    <text evidence="1">Binds 2 magnesium ions per subunit.</text>
</comment>
<comment type="pathway">
    <text evidence="1">Amino-acid biosynthesis; L-isoleucine biosynthesis; L-isoleucine from 2-oxobutanoate: step 2/4.</text>
</comment>
<comment type="pathway">
    <text evidence="1">Amino-acid biosynthesis; L-valine biosynthesis; L-valine from pyruvate: step 2/4.</text>
</comment>
<comment type="similarity">
    <text evidence="1">Belongs to the ketol-acid reductoisomerase family.</text>
</comment>
<evidence type="ECO:0000255" key="1">
    <source>
        <dbReference type="HAMAP-Rule" id="MF_00435"/>
    </source>
</evidence>
<evidence type="ECO:0000255" key="2">
    <source>
        <dbReference type="PROSITE-ProRule" id="PRU01197"/>
    </source>
</evidence>
<evidence type="ECO:0000255" key="3">
    <source>
        <dbReference type="PROSITE-ProRule" id="PRU01198"/>
    </source>
</evidence>
<gene>
    <name evidence="1" type="primary">ilvC</name>
    <name type="ordered locus">YPK_4051</name>
</gene>
<reference key="1">
    <citation type="submission" date="2008-02" db="EMBL/GenBank/DDBJ databases">
        <title>Complete sequence of Yersinia pseudotuberculosis YPIII.</title>
        <authorList>
            <consortium name="US DOE Joint Genome Institute"/>
            <person name="Copeland A."/>
            <person name="Lucas S."/>
            <person name="Lapidus A."/>
            <person name="Glavina del Rio T."/>
            <person name="Dalin E."/>
            <person name="Tice H."/>
            <person name="Bruce D."/>
            <person name="Goodwin L."/>
            <person name="Pitluck S."/>
            <person name="Munk A.C."/>
            <person name="Brettin T."/>
            <person name="Detter J.C."/>
            <person name="Han C."/>
            <person name="Tapia R."/>
            <person name="Schmutz J."/>
            <person name="Larimer F."/>
            <person name="Land M."/>
            <person name="Hauser L."/>
            <person name="Challacombe J.F."/>
            <person name="Green L."/>
            <person name="Lindler L.E."/>
            <person name="Nikolich M.P."/>
            <person name="Richardson P."/>
        </authorList>
    </citation>
    <scope>NUCLEOTIDE SEQUENCE [LARGE SCALE GENOMIC DNA]</scope>
    <source>
        <strain>YPIII</strain>
    </source>
</reference>
<keyword id="KW-0028">Amino-acid biosynthesis</keyword>
<keyword id="KW-0100">Branched-chain amino acid biosynthesis</keyword>
<keyword id="KW-0460">Magnesium</keyword>
<keyword id="KW-0479">Metal-binding</keyword>
<keyword id="KW-0521">NADP</keyword>
<keyword id="KW-0560">Oxidoreductase</keyword>
<keyword id="KW-0677">Repeat</keyword>
<name>ILVC_YERPY</name>
<accession>B1JQ26</accession>
<sequence>MANYFNTLNLRQQLAQLGKCRFMARDEFADEAGYLKGKKVVIVGCGAQGLNQGLNMRDSGLDVAYALRKEAIAEKRASWRKATENGFKVGTYEELIPQADLVVNLTPDKQHSAVVKAVQPLMKEGAALGYSHGFNIVEVGEQVRKDITVVMVAPKCPGTEVREEYKRGFGVPTLIAVHPENDPKGEGMAIAKAWAAATGGHRAGVLESSFVAEVKSDLMGEQTILCGMLQAGSLLCFDKLVSEGTDAAYAEKLIQFGWETITEALKQGGITLMMDRLSNPAKLRAYALSEQLKEIMAPLFQKHMDDIISGAFSSGMMADWANDDVKLLNWREETGRTAFENAPQFEGKISEQEYFDHGVLMIAMVKAGVELAFETMVDSGIIEESAYYESLHELPLIANTIARKRLYEMNVVISDTAEYGNYLFANAAVPLLKEKFMDSLQAGDLGKSIPGSAVDNAQLRDVNEAIRNHPIEAVGHKLRGYMTDMKRIAVAG</sequence>